<organism>
    <name type="scientific">Pseudomonas syringae pv. syringae</name>
    <dbReference type="NCBI Taxonomy" id="321"/>
    <lineage>
        <taxon>Bacteria</taxon>
        <taxon>Pseudomonadati</taxon>
        <taxon>Pseudomonadota</taxon>
        <taxon>Gammaproteobacteria</taxon>
        <taxon>Pseudomonadales</taxon>
        <taxon>Pseudomonadaceae</taxon>
        <taxon>Pseudomonas</taxon>
        <taxon>Pseudomonas syringae</taxon>
    </lineage>
</organism>
<gene>
    <name evidence="1" type="primary">dapE</name>
</gene>
<protein>
    <recommendedName>
        <fullName evidence="1">Succinyl-diaminopimelate desuccinylase</fullName>
        <shortName evidence="1">SDAP desuccinylase</shortName>
        <ecNumber evidence="1">3.5.1.18</ecNumber>
    </recommendedName>
    <alternativeName>
        <fullName evidence="1">N-succinyl-LL-2,6-diaminoheptanedioate amidohydrolase</fullName>
    </alternativeName>
</protein>
<name>DAPE_PSESY</name>
<proteinExistence type="inferred from homology"/>
<dbReference type="EC" id="3.5.1.18" evidence="1"/>
<dbReference type="EMBL" id="AY342395">
    <property type="protein sequence ID" value="AAR02167.1"/>
    <property type="molecule type" value="Genomic_DNA"/>
</dbReference>
<dbReference type="RefSeq" id="NP_940718.1">
    <property type="nucleotide sequence ID" value="NC_005205.1"/>
</dbReference>
<dbReference type="RefSeq" id="WP_002556161.1">
    <property type="nucleotide sequence ID" value="NZ_VBUL01000027.1"/>
</dbReference>
<dbReference type="SMR" id="Q6VE94"/>
<dbReference type="UniPathway" id="UPA00034">
    <property type="reaction ID" value="UER00021"/>
</dbReference>
<dbReference type="GO" id="GO:0008777">
    <property type="term" value="F:acetylornithine deacetylase activity"/>
    <property type="evidence" value="ECO:0007669"/>
    <property type="project" value="TreeGrafter"/>
</dbReference>
<dbReference type="GO" id="GO:0050897">
    <property type="term" value="F:cobalt ion binding"/>
    <property type="evidence" value="ECO:0007669"/>
    <property type="project" value="UniProtKB-UniRule"/>
</dbReference>
<dbReference type="GO" id="GO:0009014">
    <property type="term" value="F:succinyl-diaminopimelate desuccinylase activity"/>
    <property type="evidence" value="ECO:0007669"/>
    <property type="project" value="UniProtKB-UniRule"/>
</dbReference>
<dbReference type="GO" id="GO:0008270">
    <property type="term" value="F:zinc ion binding"/>
    <property type="evidence" value="ECO:0007669"/>
    <property type="project" value="UniProtKB-UniRule"/>
</dbReference>
<dbReference type="GO" id="GO:0019877">
    <property type="term" value="P:diaminopimelate biosynthetic process"/>
    <property type="evidence" value="ECO:0007669"/>
    <property type="project" value="UniProtKB-UniRule"/>
</dbReference>
<dbReference type="GO" id="GO:0006526">
    <property type="term" value="P:L-arginine biosynthetic process"/>
    <property type="evidence" value="ECO:0007669"/>
    <property type="project" value="TreeGrafter"/>
</dbReference>
<dbReference type="GO" id="GO:0009089">
    <property type="term" value="P:lysine biosynthetic process via diaminopimelate"/>
    <property type="evidence" value="ECO:0007669"/>
    <property type="project" value="UniProtKB-UniRule"/>
</dbReference>
<dbReference type="CDD" id="cd03891">
    <property type="entry name" value="M20_DapE_proteobac"/>
    <property type="match status" value="1"/>
</dbReference>
<dbReference type="FunFam" id="3.40.630.10:FF:000005">
    <property type="entry name" value="Succinyl-diaminopimelate desuccinylase"/>
    <property type="match status" value="1"/>
</dbReference>
<dbReference type="Gene3D" id="3.40.630.10">
    <property type="entry name" value="Zn peptidases"/>
    <property type="match status" value="2"/>
</dbReference>
<dbReference type="HAMAP" id="MF_01690">
    <property type="entry name" value="DapE"/>
    <property type="match status" value="1"/>
</dbReference>
<dbReference type="InterPro" id="IPR001261">
    <property type="entry name" value="ArgE/DapE_CS"/>
</dbReference>
<dbReference type="InterPro" id="IPR036264">
    <property type="entry name" value="Bact_exopeptidase_dim_dom"/>
</dbReference>
<dbReference type="InterPro" id="IPR005941">
    <property type="entry name" value="DapE_proteobac"/>
</dbReference>
<dbReference type="InterPro" id="IPR002933">
    <property type="entry name" value="Peptidase_M20"/>
</dbReference>
<dbReference type="InterPro" id="IPR011650">
    <property type="entry name" value="Peptidase_M20_dimer"/>
</dbReference>
<dbReference type="InterPro" id="IPR050072">
    <property type="entry name" value="Peptidase_M20A"/>
</dbReference>
<dbReference type="NCBIfam" id="TIGR01246">
    <property type="entry name" value="dapE_proteo"/>
    <property type="match status" value="1"/>
</dbReference>
<dbReference type="NCBIfam" id="NF009557">
    <property type="entry name" value="PRK13009.1"/>
    <property type="match status" value="1"/>
</dbReference>
<dbReference type="PANTHER" id="PTHR43808">
    <property type="entry name" value="ACETYLORNITHINE DEACETYLASE"/>
    <property type="match status" value="1"/>
</dbReference>
<dbReference type="PANTHER" id="PTHR43808:SF31">
    <property type="entry name" value="N-ACETYL-L-CITRULLINE DEACETYLASE"/>
    <property type="match status" value="1"/>
</dbReference>
<dbReference type="Pfam" id="PF07687">
    <property type="entry name" value="M20_dimer"/>
    <property type="match status" value="1"/>
</dbReference>
<dbReference type="Pfam" id="PF01546">
    <property type="entry name" value="Peptidase_M20"/>
    <property type="match status" value="1"/>
</dbReference>
<dbReference type="SUPFAM" id="SSF55031">
    <property type="entry name" value="Bacterial exopeptidase dimerisation domain"/>
    <property type="match status" value="1"/>
</dbReference>
<dbReference type="SUPFAM" id="SSF53187">
    <property type="entry name" value="Zn-dependent exopeptidases"/>
    <property type="match status" value="1"/>
</dbReference>
<dbReference type="PROSITE" id="PS00759">
    <property type="entry name" value="ARGE_DAPE_CPG2_2"/>
    <property type="match status" value="1"/>
</dbReference>
<geneLocation type="plasmid">
    <name>pPSR1</name>
</geneLocation>
<reference key="1">
    <citation type="journal article" date="2004" name="Mol. Genet. Genomics">
        <title>Complete nucleotide sequence and analysis of pPSR1 (72,601 bp), a pPT23A-family plasmid from Pseudomonas syringae pv. syringae A2.</title>
        <authorList>
            <person name="Sundin G.W."/>
            <person name="Mayfield C.T."/>
            <person name="Zhao Y."/>
            <person name="Gunasekera T.S."/>
            <person name="Foster G.L."/>
            <person name="Ullrich M.S."/>
        </authorList>
    </citation>
    <scope>NUCLEOTIDE SEQUENCE [GENOMIC DNA]</scope>
    <source>
        <strain>A2</strain>
    </source>
</reference>
<comment type="function">
    <text evidence="1">Catalyzes the hydrolysis of N-succinyl-L,L-diaminopimelic acid (SDAP), forming succinate and LL-2,6-diaminopimelate (DAP), an intermediate involved in the bacterial biosynthesis of lysine and meso-diaminopimelic acid, an essential component of bacterial cell walls.</text>
</comment>
<comment type="catalytic activity">
    <reaction evidence="1">
        <text>N-succinyl-(2S,6S)-2,6-diaminopimelate + H2O = (2S,6S)-2,6-diaminopimelate + succinate</text>
        <dbReference type="Rhea" id="RHEA:22608"/>
        <dbReference type="ChEBI" id="CHEBI:15377"/>
        <dbReference type="ChEBI" id="CHEBI:30031"/>
        <dbReference type="ChEBI" id="CHEBI:57609"/>
        <dbReference type="ChEBI" id="CHEBI:58087"/>
        <dbReference type="EC" id="3.5.1.18"/>
    </reaction>
</comment>
<comment type="cofactor">
    <cofactor evidence="1">
        <name>Zn(2+)</name>
        <dbReference type="ChEBI" id="CHEBI:29105"/>
    </cofactor>
    <cofactor evidence="1">
        <name>Co(2+)</name>
        <dbReference type="ChEBI" id="CHEBI:48828"/>
    </cofactor>
    <text evidence="1">Binds 2 Zn(2+) or Co(2+) ions per subunit.</text>
</comment>
<comment type="pathway">
    <text evidence="1">Amino-acid biosynthesis; L-lysine biosynthesis via DAP pathway; LL-2,6-diaminopimelate from (S)-tetrahydrodipicolinate (succinylase route): step 3/3.</text>
</comment>
<comment type="subunit">
    <text evidence="1">Homodimer.</text>
</comment>
<comment type="similarity">
    <text evidence="1">Belongs to the peptidase M20A family. DapE subfamily.</text>
</comment>
<evidence type="ECO:0000255" key="1">
    <source>
        <dbReference type="HAMAP-Rule" id="MF_01690"/>
    </source>
</evidence>
<keyword id="KW-0028">Amino-acid biosynthesis</keyword>
<keyword id="KW-0170">Cobalt</keyword>
<keyword id="KW-0220">Diaminopimelate biosynthesis</keyword>
<keyword id="KW-0378">Hydrolase</keyword>
<keyword id="KW-0457">Lysine biosynthesis</keyword>
<keyword id="KW-0479">Metal-binding</keyword>
<keyword id="KW-0614">Plasmid</keyword>
<keyword id="KW-0862">Zinc</keyword>
<accession>Q6VE94</accession>
<feature type="chain" id="PRO_0000375667" description="Succinyl-diaminopimelate desuccinylase">
    <location>
        <begin position="1"/>
        <end position="378"/>
    </location>
</feature>
<feature type="active site" evidence="1">
    <location>
        <position position="70"/>
    </location>
</feature>
<feature type="active site" description="Proton acceptor" evidence="1">
    <location>
        <position position="136"/>
    </location>
</feature>
<feature type="binding site" evidence="1">
    <location>
        <position position="68"/>
    </location>
    <ligand>
        <name>Zn(2+)</name>
        <dbReference type="ChEBI" id="CHEBI:29105"/>
        <label>1</label>
    </ligand>
</feature>
<feature type="binding site" evidence="1">
    <location>
        <position position="102"/>
    </location>
    <ligand>
        <name>Zn(2+)</name>
        <dbReference type="ChEBI" id="CHEBI:29105"/>
        <label>1</label>
    </ligand>
</feature>
<feature type="binding site" evidence="1">
    <location>
        <position position="102"/>
    </location>
    <ligand>
        <name>Zn(2+)</name>
        <dbReference type="ChEBI" id="CHEBI:29105"/>
        <label>2</label>
    </ligand>
</feature>
<feature type="binding site" evidence="1">
    <location>
        <position position="137"/>
    </location>
    <ligand>
        <name>Zn(2+)</name>
        <dbReference type="ChEBI" id="CHEBI:29105"/>
        <label>2</label>
    </ligand>
</feature>
<feature type="binding site" evidence="1">
    <location>
        <position position="165"/>
    </location>
    <ligand>
        <name>Zn(2+)</name>
        <dbReference type="ChEBI" id="CHEBI:29105"/>
        <label>1</label>
    </ligand>
</feature>
<feature type="binding site" evidence="1">
    <location>
        <position position="351"/>
    </location>
    <ligand>
        <name>Zn(2+)</name>
        <dbReference type="ChEBI" id="CHEBI:29105"/>
        <label>2</label>
    </ligand>
</feature>
<sequence length="378" mass="40484">MLSPTLELACDLIRRPSVTPVDAGCQELMMARLANVGFALEQMRIENVDNFWASHGGNDGPVLCFAGHTDVVPTGPLQAWNIPPFDAFIDDQGMLHGRGAADMKGSLAAMLVAAERFVVDYPDHRGSVAFLITSDEEGPAHHGTKAVVERLVARQQRLDWCIVGEPSSTTLVGDIVKNGRRGSLGATLTLRGVQGHVAYPHLAKNPIHLLAPALAELVSEHWDSGNAFFPPTSFQVSNLNSGTGATNVIPGELVAVFNFRFSTESTVESLKSRVAEILDKHSLDWHIDWALSGLPFLTEPGALLDAVASSIKAVTGRDTQASTSGGTSDGRFIATMGTQVVELGPVNATIHQVNECILASDLDVLTEIYYETLIKLLA</sequence>